<protein>
    <recommendedName>
        <fullName evidence="1">Protein-glutamate methylesterase/protein-glutamine glutaminase</fullName>
        <ecNumber evidence="1">3.1.1.61</ecNumber>
        <ecNumber evidence="1">3.5.1.44</ecNumber>
    </recommendedName>
</protein>
<name>CHEB_METFK</name>
<dbReference type="EC" id="3.1.1.61" evidence="1"/>
<dbReference type="EC" id="3.5.1.44" evidence="1"/>
<dbReference type="EMBL" id="CP000284">
    <property type="protein sequence ID" value="ABE50197.1"/>
    <property type="molecule type" value="Genomic_DNA"/>
</dbReference>
<dbReference type="RefSeq" id="WP_011480151.1">
    <property type="nucleotide sequence ID" value="NC_007947.1"/>
</dbReference>
<dbReference type="SMR" id="Q1GZZ0"/>
<dbReference type="STRING" id="265072.Mfla_1930"/>
<dbReference type="KEGG" id="mfa:Mfla_1930"/>
<dbReference type="eggNOG" id="COG2201">
    <property type="taxonomic scope" value="Bacteria"/>
</dbReference>
<dbReference type="HOGENOM" id="CLU_000445_51_0_4"/>
<dbReference type="OrthoDB" id="9793421at2"/>
<dbReference type="Proteomes" id="UP000002440">
    <property type="component" value="Chromosome"/>
</dbReference>
<dbReference type="GO" id="GO:0005737">
    <property type="term" value="C:cytoplasm"/>
    <property type="evidence" value="ECO:0007669"/>
    <property type="project" value="UniProtKB-SubCell"/>
</dbReference>
<dbReference type="GO" id="GO:0000156">
    <property type="term" value="F:phosphorelay response regulator activity"/>
    <property type="evidence" value="ECO:0007669"/>
    <property type="project" value="InterPro"/>
</dbReference>
<dbReference type="GO" id="GO:0008984">
    <property type="term" value="F:protein-glutamate methylesterase activity"/>
    <property type="evidence" value="ECO:0007669"/>
    <property type="project" value="UniProtKB-UniRule"/>
</dbReference>
<dbReference type="GO" id="GO:0050568">
    <property type="term" value="F:protein-glutamine glutaminase activity"/>
    <property type="evidence" value="ECO:0007669"/>
    <property type="project" value="UniProtKB-UniRule"/>
</dbReference>
<dbReference type="GO" id="GO:0006935">
    <property type="term" value="P:chemotaxis"/>
    <property type="evidence" value="ECO:0007669"/>
    <property type="project" value="UniProtKB-UniRule"/>
</dbReference>
<dbReference type="CDD" id="cd16432">
    <property type="entry name" value="CheB_Rec"/>
    <property type="match status" value="1"/>
</dbReference>
<dbReference type="CDD" id="cd17541">
    <property type="entry name" value="REC_CheB-like"/>
    <property type="match status" value="1"/>
</dbReference>
<dbReference type="FunFam" id="3.40.50.180:FF:000001">
    <property type="entry name" value="Protein-glutamate methylesterase/protein-glutamine glutaminase"/>
    <property type="match status" value="1"/>
</dbReference>
<dbReference type="FunFam" id="3.40.50.2300:FF:000060">
    <property type="entry name" value="Protein-glutamate methylesterase/protein-glutamine glutaminase"/>
    <property type="match status" value="1"/>
</dbReference>
<dbReference type="Gene3D" id="3.40.50.2300">
    <property type="match status" value="1"/>
</dbReference>
<dbReference type="Gene3D" id="3.40.50.180">
    <property type="entry name" value="Methylesterase CheB, C-terminal domain"/>
    <property type="match status" value="1"/>
</dbReference>
<dbReference type="HAMAP" id="MF_00099">
    <property type="entry name" value="CheB_chemtxs"/>
    <property type="match status" value="1"/>
</dbReference>
<dbReference type="InterPro" id="IPR008248">
    <property type="entry name" value="CheB-like"/>
</dbReference>
<dbReference type="InterPro" id="IPR035909">
    <property type="entry name" value="CheB_C"/>
</dbReference>
<dbReference type="InterPro" id="IPR011006">
    <property type="entry name" value="CheY-like_superfamily"/>
</dbReference>
<dbReference type="InterPro" id="IPR000673">
    <property type="entry name" value="Sig_transdc_resp-reg_Me-estase"/>
</dbReference>
<dbReference type="InterPro" id="IPR001789">
    <property type="entry name" value="Sig_transdc_resp-reg_receiver"/>
</dbReference>
<dbReference type="NCBIfam" id="NF001965">
    <property type="entry name" value="PRK00742.1"/>
    <property type="match status" value="1"/>
</dbReference>
<dbReference type="NCBIfam" id="NF009206">
    <property type="entry name" value="PRK12555.1"/>
    <property type="match status" value="1"/>
</dbReference>
<dbReference type="PANTHER" id="PTHR42872">
    <property type="entry name" value="PROTEIN-GLUTAMATE METHYLESTERASE/PROTEIN-GLUTAMINE GLUTAMINASE"/>
    <property type="match status" value="1"/>
</dbReference>
<dbReference type="PANTHER" id="PTHR42872:SF6">
    <property type="entry name" value="PROTEIN-GLUTAMATE METHYLESTERASE_PROTEIN-GLUTAMINE GLUTAMINASE"/>
    <property type="match status" value="1"/>
</dbReference>
<dbReference type="Pfam" id="PF01339">
    <property type="entry name" value="CheB_methylest"/>
    <property type="match status" value="1"/>
</dbReference>
<dbReference type="Pfam" id="PF00072">
    <property type="entry name" value="Response_reg"/>
    <property type="match status" value="1"/>
</dbReference>
<dbReference type="PIRSF" id="PIRSF000876">
    <property type="entry name" value="RR_chemtxs_CheB"/>
    <property type="match status" value="1"/>
</dbReference>
<dbReference type="SMART" id="SM00448">
    <property type="entry name" value="REC"/>
    <property type="match status" value="1"/>
</dbReference>
<dbReference type="SUPFAM" id="SSF52172">
    <property type="entry name" value="CheY-like"/>
    <property type="match status" value="1"/>
</dbReference>
<dbReference type="SUPFAM" id="SSF52738">
    <property type="entry name" value="Methylesterase CheB, C-terminal domain"/>
    <property type="match status" value="1"/>
</dbReference>
<dbReference type="PROSITE" id="PS50122">
    <property type="entry name" value="CHEB"/>
    <property type="match status" value="1"/>
</dbReference>
<dbReference type="PROSITE" id="PS50110">
    <property type="entry name" value="RESPONSE_REGULATORY"/>
    <property type="match status" value="1"/>
</dbReference>
<keyword id="KW-0145">Chemotaxis</keyword>
<keyword id="KW-0963">Cytoplasm</keyword>
<keyword id="KW-0378">Hydrolase</keyword>
<keyword id="KW-0597">Phosphoprotein</keyword>
<keyword id="KW-1185">Reference proteome</keyword>
<evidence type="ECO:0000255" key="1">
    <source>
        <dbReference type="HAMAP-Rule" id="MF_00099"/>
    </source>
</evidence>
<proteinExistence type="inferred from homology"/>
<reference key="1">
    <citation type="submission" date="2006-03" db="EMBL/GenBank/DDBJ databases">
        <title>Complete sequence of Methylobacillus flagellatus KT.</title>
        <authorList>
            <consortium name="US DOE Joint Genome Institute"/>
            <person name="Copeland A."/>
            <person name="Lucas S."/>
            <person name="Lapidus A."/>
            <person name="Barry K."/>
            <person name="Detter J.C."/>
            <person name="Glavina del Rio T."/>
            <person name="Hammon N."/>
            <person name="Israni S."/>
            <person name="Dalin E."/>
            <person name="Tice H."/>
            <person name="Pitluck S."/>
            <person name="Brettin T."/>
            <person name="Bruce D."/>
            <person name="Han C."/>
            <person name="Tapia R."/>
            <person name="Saunders E."/>
            <person name="Gilna P."/>
            <person name="Schmutz J."/>
            <person name="Larimer F."/>
            <person name="Land M."/>
            <person name="Kyrpides N."/>
            <person name="Anderson I."/>
            <person name="Richardson P."/>
        </authorList>
    </citation>
    <scope>NUCLEOTIDE SEQUENCE [LARGE SCALE GENOMIC DNA]</scope>
    <source>
        <strain>ATCC 51484 / DSM 6875 / VKM B-1610 / KT</strain>
    </source>
</reference>
<gene>
    <name evidence="1" type="primary">cheB</name>
    <name type="ordered locus">Mfla_1930</name>
</gene>
<comment type="function">
    <text evidence="1">Involved in chemotaxis. Part of a chemotaxis signal transduction system that modulates chemotaxis in response to various stimuli. Catalyzes the demethylation of specific methylglutamate residues introduced into the chemoreceptors (methyl-accepting chemotaxis proteins or MCP) by CheR. Also mediates the irreversible deamidation of specific glutamine residues to glutamic acid.</text>
</comment>
<comment type="catalytic activity">
    <reaction evidence="1">
        <text>[protein]-L-glutamate 5-O-methyl ester + H2O = L-glutamyl-[protein] + methanol + H(+)</text>
        <dbReference type="Rhea" id="RHEA:23236"/>
        <dbReference type="Rhea" id="RHEA-COMP:10208"/>
        <dbReference type="Rhea" id="RHEA-COMP:10311"/>
        <dbReference type="ChEBI" id="CHEBI:15377"/>
        <dbReference type="ChEBI" id="CHEBI:15378"/>
        <dbReference type="ChEBI" id="CHEBI:17790"/>
        <dbReference type="ChEBI" id="CHEBI:29973"/>
        <dbReference type="ChEBI" id="CHEBI:82795"/>
        <dbReference type="EC" id="3.1.1.61"/>
    </reaction>
</comment>
<comment type="catalytic activity">
    <reaction evidence="1">
        <text>L-glutaminyl-[protein] + H2O = L-glutamyl-[protein] + NH4(+)</text>
        <dbReference type="Rhea" id="RHEA:16441"/>
        <dbReference type="Rhea" id="RHEA-COMP:10207"/>
        <dbReference type="Rhea" id="RHEA-COMP:10208"/>
        <dbReference type="ChEBI" id="CHEBI:15377"/>
        <dbReference type="ChEBI" id="CHEBI:28938"/>
        <dbReference type="ChEBI" id="CHEBI:29973"/>
        <dbReference type="ChEBI" id="CHEBI:30011"/>
        <dbReference type="EC" id="3.5.1.44"/>
    </reaction>
</comment>
<comment type="subcellular location">
    <subcellularLocation>
        <location evidence="1">Cytoplasm</location>
    </subcellularLocation>
</comment>
<comment type="domain">
    <text evidence="1">Contains a C-terminal catalytic domain, and an N-terminal region which modulates catalytic activity.</text>
</comment>
<comment type="PTM">
    <text evidence="1">Phosphorylated by CheA. Phosphorylation of the N-terminal regulatory domain activates the methylesterase activity.</text>
</comment>
<comment type="similarity">
    <text evidence="1">Belongs to the CheB family.</text>
</comment>
<sequence>MTIKVLIIDDSALIRSLLTEIINQQPDLEVVGTAPDPLIAREMIKQKNPDVLTLDVEMPKMDGLDFLERLMRLRPMPVVMISSLTERGSEITMRAMELGAVDFVTKPKISIANGMHEYSEMIADKIRAASRARLIARKPLTPVAGGAGLPLVGNPLISSEKLIIIGASTGGTEAIKSFLMQMPSDCPGILITQHMPAGFTQSFANRLNALCKISVQEAKGGERVLPGHAYIAPGHSHLLLARSGANYVTQLDDGPPVSRHRPSVDVLFSSAANNAGKNAIGVILTGMGKDGAEGMLKMKQAGAYNFAQDEASCVVFGMPKEAIAMGGVDDVSSLNDMPGRVLQYLAANSGRALRV</sequence>
<accession>Q1GZZ0</accession>
<feature type="chain" id="PRO_0000264290" description="Protein-glutamate methylesterase/protein-glutamine glutaminase">
    <location>
        <begin position="1"/>
        <end position="355"/>
    </location>
</feature>
<feature type="domain" description="Response regulatory" evidence="1">
    <location>
        <begin position="4"/>
        <end position="121"/>
    </location>
</feature>
<feature type="domain" description="CheB-type methylesterase" evidence="1">
    <location>
        <begin position="156"/>
        <end position="348"/>
    </location>
</feature>
<feature type="active site" evidence="1">
    <location>
        <position position="168"/>
    </location>
</feature>
<feature type="active site" evidence="1">
    <location>
        <position position="194"/>
    </location>
</feature>
<feature type="active site" evidence="1">
    <location>
        <position position="290"/>
    </location>
</feature>
<feature type="modified residue" description="4-aspartylphosphate" evidence="1">
    <location>
        <position position="55"/>
    </location>
</feature>
<organism>
    <name type="scientific">Methylobacillus flagellatus (strain ATCC 51484 / DSM 6875 / VKM B-1610 / KT)</name>
    <dbReference type="NCBI Taxonomy" id="265072"/>
    <lineage>
        <taxon>Bacteria</taxon>
        <taxon>Pseudomonadati</taxon>
        <taxon>Pseudomonadota</taxon>
        <taxon>Betaproteobacteria</taxon>
        <taxon>Nitrosomonadales</taxon>
        <taxon>Methylophilaceae</taxon>
        <taxon>Methylobacillus</taxon>
    </lineage>
</organism>